<protein>
    <recommendedName>
        <fullName evidence="6">PTS system mannitol-specific EIICB component</fullName>
    </recommendedName>
    <alternativeName>
        <fullName evidence="6">EIICB-Mtl</fullName>
        <shortName evidence="6">EII-Mtl</shortName>
    </alternativeName>
    <domain>
        <recommendedName>
            <fullName evidence="1">Mannitol permease IIC component</fullName>
        </recommendedName>
        <alternativeName>
            <fullName evidence="1">PTS system mannitol-specific EIIC component</fullName>
        </alternativeName>
    </domain>
    <domain>
        <recommendedName>
            <fullName evidence="1">Mannitol-specific phosphotransferase enzyme IIB component</fullName>
            <ecNumber evidence="1 2">2.7.1.197</ecNumber>
        </recommendedName>
        <alternativeName>
            <fullName evidence="1">PTS system mannitol-specific EIIB component</fullName>
        </alternativeName>
    </domain>
</protein>
<name>PTMCB_GEOSE</name>
<dbReference type="EC" id="2.7.1.197" evidence="1 2"/>
<dbReference type="EMBL" id="U18943">
    <property type="protein sequence ID" value="AAC44463.1"/>
    <property type="molecule type" value="Genomic_DNA"/>
</dbReference>
<dbReference type="SMR" id="P50852"/>
<dbReference type="GO" id="GO:0005886">
    <property type="term" value="C:plasma membrane"/>
    <property type="evidence" value="ECO:0007669"/>
    <property type="project" value="UniProtKB-SubCell"/>
</dbReference>
<dbReference type="GO" id="GO:0016301">
    <property type="term" value="F:kinase activity"/>
    <property type="evidence" value="ECO:0007669"/>
    <property type="project" value="UniProtKB-KW"/>
</dbReference>
<dbReference type="GO" id="GO:0022872">
    <property type="term" value="F:protein-N(PI)-phosphohistidine-mannitol phosphotransferase system transmembrane transporter activity"/>
    <property type="evidence" value="ECO:0007669"/>
    <property type="project" value="InterPro"/>
</dbReference>
<dbReference type="GO" id="GO:0090563">
    <property type="term" value="F:protein-phosphocysteine-sugar phosphotransferase activity"/>
    <property type="evidence" value="ECO:0007669"/>
    <property type="project" value="TreeGrafter"/>
</dbReference>
<dbReference type="GO" id="GO:0009401">
    <property type="term" value="P:phosphoenolpyruvate-dependent sugar phosphotransferase system"/>
    <property type="evidence" value="ECO:0007669"/>
    <property type="project" value="UniProtKB-KW"/>
</dbReference>
<dbReference type="CDD" id="cd05567">
    <property type="entry name" value="PTS_IIB_mannitol"/>
    <property type="match status" value="1"/>
</dbReference>
<dbReference type="FunFam" id="3.40.50.2300:FF:000047">
    <property type="entry name" value="PTS system mannitol-specific transporter subunit IICBA"/>
    <property type="match status" value="1"/>
</dbReference>
<dbReference type="Gene3D" id="3.40.50.2300">
    <property type="match status" value="1"/>
</dbReference>
<dbReference type="InterPro" id="IPR036095">
    <property type="entry name" value="PTS_EIIB-like_sf"/>
</dbReference>
<dbReference type="InterPro" id="IPR013011">
    <property type="entry name" value="PTS_EIIB_2"/>
</dbReference>
<dbReference type="InterPro" id="IPR003501">
    <property type="entry name" value="PTS_EIIB_2/3"/>
</dbReference>
<dbReference type="InterPro" id="IPR029503">
    <property type="entry name" value="PTS_EIIB_mannitol"/>
</dbReference>
<dbReference type="InterPro" id="IPR003352">
    <property type="entry name" value="PTS_EIIC"/>
</dbReference>
<dbReference type="InterPro" id="IPR013014">
    <property type="entry name" value="PTS_EIIC_2"/>
</dbReference>
<dbReference type="InterPro" id="IPR004718">
    <property type="entry name" value="PTS_IIC_mtl"/>
</dbReference>
<dbReference type="InterPro" id="IPR050893">
    <property type="entry name" value="Sugar_PTS"/>
</dbReference>
<dbReference type="NCBIfam" id="TIGR00851">
    <property type="entry name" value="mtlA"/>
    <property type="match status" value="1"/>
</dbReference>
<dbReference type="NCBIfam" id="NF011663">
    <property type="entry name" value="PRK15083.1"/>
    <property type="match status" value="1"/>
</dbReference>
<dbReference type="PANTHER" id="PTHR30181">
    <property type="entry name" value="MANNITOL PERMEASE IIC COMPONENT"/>
    <property type="match status" value="1"/>
</dbReference>
<dbReference type="PANTHER" id="PTHR30181:SF2">
    <property type="entry name" value="PTS SYSTEM MANNITOL-SPECIFIC EIICBA COMPONENT"/>
    <property type="match status" value="1"/>
</dbReference>
<dbReference type="Pfam" id="PF02378">
    <property type="entry name" value="PTS_EIIC"/>
    <property type="match status" value="1"/>
</dbReference>
<dbReference type="Pfam" id="PF02302">
    <property type="entry name" value="PTS_IIB"/>
    <property type="match status" value="1"/>
</dbReference>
<dbReference type="SUPFAM" id="SSF52794">
    <property type="entry name" value="PTS system IIB component-like"/>
    <property type="match status" value="1"/>
</dbReference>
<dbReference type="PROSITE" id="PS51099">
    <property type="entry name" value="PTS_EIIB_TYPE_2"/>
    <property type="match status" value="1"/>
</dbReference>
<dbReference type="PROSITE" id="PS51104">
    <property type="entry name" value="PTS_EIIC_TYPE_2"/>
    <property type="match status" value="1"/>
</dbReference>
<proteinExistence type="evidence at protein level"/>
<organism>
    <name type="scientific">Geobacillus stearothermophilus</name>
    <name type="common">Bacillus stearothermophilus</name>
    <dbReference type="NCBI Taxonomy" id="1422"/>
    <lineage>
        <taxon>Bacteria</taxon>
        <taxon>Bacillati</taxon>
        <taxon>Bacillota</taxon>
        <taxon>Bacilli</taxon>
        <taxon>Bacillales</taxon>
        <taxon>Anoxybacillaceae</taxon>
        <taxon>Geobacillus</taxon>
    </lineage>
</organism>
<feature type="chain" id="PRO_0000186609" description="PTS system mannitol-specific EIICB component">
    <location>
        <begin position="1"/>
        <end position="471"/>
    </location>
</feature>
<feature type="topological domain" description="Cytoplasmic" evidence="1">
    <location>
        <begin position="1"/>
        <end position="29"/>
    </location>
</feature>
<feature type="transmembrane region" description="Helical" evidence="1">
    <location>
        <begin position="30"/>
        <end position="51"/>
    </location>
</feature>
<feature type="topological domain" description="Extracellular" evidence="1">
    <location>
        <begin position="52"/>
        <end position="55"/>
    </location>
</feature>
<feature type="transmembrane region" description="Helical" evidence="1">
    <location>
        <begin position="56"/>
        <end position="76"/>
    </location>
</feature>
<feature type="topological domain" description="Cytoplasmic" evidence="1">
    <location>
        <begin position="77"/>
        <end position="139"/>
    </location>
</feature>
<feature type="transmembrane region" description="Helical" evidence="1">
    <location>
        <begin position="140"/>
        <end position="161"/>
    </location>
</feature>
<feature type="topological domain" description="Extracellular" evidence="1">
    <location>
        <begin position="162"/>
        <end position="170"/>
    </location>
</feature>
<feature type="transmembrane region" description="Helical" evidence="1">
    <location>
        <begin position="171"/>
        <end position="191"/>
    </location>
</feature>
<feature type="topological domain" description="Cytoplasmic" evidence="1">
    <location>
        <begin position="192"/>
        <end position="278"/>
    </location>
</feature>
<feature type="transmembrane region" description="Helical" evidence="1">
    <location>
        <begin position="279"/>
        <end position="298"/>
    </location>
</feature>
<feature type="topological domain" description="Extracellular" evidence="1">
    <location>
        <begin position="299"/>
        <end position="318"/>
    </location>
</feature>
<feature type="transmembrane region" description="Helical" evidence="1">
    <location>
        <begin position="319"/>
        <end position="340"/>
    </location>
</feature>
<feature type="topological domain" description="Cytoplasmic" evidence="1">
    <location>
        <begin position="341"/>
        <end position="471"/>
    </location>
</feature>
<feature type="domain" description="PTS EIIC type-2" evidence="4">
    <location>
        <begin position="18"/>
        <end position="342"/>
    </location>
</feature>
<feature type="domain" description="PTS EIIB type-2" evidence="3">
    <location>
        <begin position="383"/>
        <end position="471"/>
    </location>
</feature>
<feature type="active site" description="Phosphocysteine intermediate; for EIIB activity" evidence="1 2">
    <location>
        <position position="389"/>
    </location>
</feature>
<feature type="modified residue" description="Phosphocysteine; by EIIA" evidence="1 2 3">
    <location>
        <position position="389"/>
    </location>
</feature>
<evidence type="ECO:0000250" key="1">
    <source>
        <dbReference type="UniProtKB" id="P00550"/>
    </source>
</evidence>
<evidence type="ECO:0000250" key="2">
    <source>
        <dbReference type="UniProtKB" id="P28008"/>
    </source>
</evidence>
<evidence type="ECO:0000255" key="3">
    <source>
        <dbReference type="PROSITE-ProRule" id="PRU00422"/>
    </source>
</evidence>
<evidence type="ECO:0000255" key="4">
    <source>
        <dbReference type="PROSITE-ProRule" id="PRU00427"/>
    </source>
</evidence>
<evidence type="ECO:0000269" key="5">
    <source>
    </source>
</evidence>
<evidence type="ECO:0000303" key="6">
    <source>
    </source>
</evidence>
<evidence type="ECO:0000305" key="7">
    <source>
    </source>
</evidence>
<gene>
    <name evidence="6" type="primary">mtlA</name>
</gene>
<comment type="function">
    <text evidence="2 7">The phosphoenolpyruvate-dependent sugar phosphotransferase system (sugar PTS), a major carbohydrate active transport system, catalyzes the phosphorylation of incoming sugar substrates concomitantly with their translocation across the cell membrane. The enzyme II CmtAB PTS system is involved in D-mannitol transport.</text>
</comment>
<comment type="catalytic activity">
    <reaction evidence="1 2">
        <text>D-mannitol(out) + N(pros)-phospho-L-histidyl-[protein] = D-mannitol 1-phosphate(in) + L-histidyl-[protein]</text>
        <dbReference type="Rhea" id="RHEA:33363"/>
        <dbReference type="Rhea" id="RHEA-COMP:9745"/>
        <dbReference type="Rhea" id="RHEA-COMP:9746"/>
        <dbReference type="ChEBI" id="CHEBI:16899"/>
        <dbReference type="ChEBI" id="CHEBI:29979"/>
        <dbReference type="ChEBI" id="CHEBI:61381"/>
        <dbReference type="ChEBI" id="CHEBI:64837"/>
        <dbReference type="EC" id="2.7.1.197"/>
    </reaction>
</comment>
<comment type="biophysicochemical properties">
    <phDependence>
        <text evidence="5">Optimum pH is around 6.</text>
    </phDependence>
    <temperatureDependence>
        <text evidence="5">Optimum temperature is 85 degrees Celsius.</text>
    </temperatureDependence>
</comment>
<comment type="subunit">
    <text evidence="2">Homodimer.</text>
</comment>
<comment type="subcellular location">
    <subcellularLocation>
        <location evidence="4 5">Cell membrane</location>
        <topology evidence="4">Multi-pass membrane protein</topology>
    </subcellularLocation>
</comment>
<comment type="domain">
    <text evidence="4">The EIIC type-2 domain forms the PTS system translocation channel and contains the specific substrate-binding site.</text>
</comment>
<comment type="domain">
    <text evidence="3">The PTS EIIB type-2 domain is phosphorylated by phospho-EIIA on a cysteinyl residue. Then, it transfers the phosphoryl group to the sugar substrate concomitantly with the sugar uptake processed by the PTS EIIC type-2 domain.</text>
</comment>
<accession>P50852</accession>
<reference key="1">
    <citation type="journal article" date="1996" name="J. Bacteriol.">
        <title>Cloning, expression, and isolation of the mannitol transport protein from the thermophilic bacterium Bacillus stearothermophilus.</title>
        <authorList>
            <person name="Henstra S.A."/>
            <person name="Tolner B."/>
            <person name="ten Hoeve Duurkens R.H."/>
            <person name="Konings W.N."/>
            <person name="Robillard G.T."/>
        </authorList>
    </citation>
    <scope>NUCLEOTIDE SEQUENCE [GENOMIC DNA]</scope>
    <scope>FUNCTION</scope>
    <scope>SUBCELLULAR LOCATION</scope>
    <scope>BIOPHYSICOCHEMICAL PROPERTIES</scope>
    <source>
        <strain>ATCC 29609 / DSM 2027 / NCA 1503 / NCIMB 8924</strain>
    </source>
</reference>
<sequence>MTHTSENQAGFRVKIQRFGSYLSGMIMPNIGAFIAWGIITALFIPTGWLPNETFAKLVGPMITYLLPLLIGYTGGKMIYDVRGGVVGATATMGVIVGSDIPMFLGAMIMGPLGGYLIKKFDQQIQGKVKQGFEMLVNNFSAGIIGGLLTLAAFKGVGPVVSAISKTLAAGVEKIVDLHLLPLANIFIEPGKVLFLNNAINHGILSPLGIEQAAKTGKSILFLLEPNPGPGLGILLAYWLFGKGMAKQSAPGAIIIHFLGGIHEIYFPYVLMRPILILAAIAGGVSGVLTFTIFDAGLVAVPSPGSIFALLAMTPKGNYLGVLAGVLVATAVSFFVASIFLKSAKNNEEDITKATEKMQQLKGKKSDVVAVLKNEEKVIPAKVKKIVFACDAGMGSSAMGASILRNKMQKAGLNIEVTNTAINQLPEDADIVITHQNLTDRAKEKLPKAFHISVENFLNSPKYDELIEMLKK</sequence>
<keyword id="KW-1003">Cell membrane</keyword>
<keyword id="KW-0418">Kinase</keyword>
<keyword id="KW-0472">Membrane</keyword>
<keyword id="KW-0597">Phosphoprotein</keyword>
<keyword id="KW-0598">Phosphotransferase system</keyword>
<keyword id="KW-0762">Sugar transport</keyword>
<keyword id="KW-0808">Transferase</keyword>
<keyword id="KW-0812">Transmembrane</keyword>
<keyword id="KW-1133">Transmembrane helix</keyword>
<keyword id="KW-0813">Transport</keyword>